<dbReference type="EC" id="4.2.1.20" evidence="1"/>
<dbReference type="EMBL" id="AE009439">
    <property type="protein sequence ID" value="AAM01998.1"/>
    <property type="molecule type" value="Genomic_DNA"/>
</dbReference>
<dbReference type="SMR" id="Q8TX91"/>
<dbReference type="FunCoup" id="Q8TX91">
    <property type="interactions" value="125"/>
</dbReference>
<dbReference type="STRING" id="190192.MK0784"/>
<dbReference type="PaxDb" id="190192-MK0784"/>
<dbReference type="EnsemblBacteria" id="AAM01998">
    <property type="protein sequence ID" value="AAM01998"/>
    <property type="gene ID" value="MK0784"/>
</dbReference>
<dbReference type="KEGG" id="mka:MK0784"/>
<dbReference type="PATRIC" id="fig|190192.8.peg.826"/>
<dbReference type="HOGENOM" id="CLU_016734_3_1_2"/>
<dbReference type="InParanoid" id="Q8TX91"/>
<dbReference type="UniPathway" id="UPA00035">
    <property type="reaction ID" value="UER00044"/>
</dbReference>
<dbReference type="Proteomes" id="UP000001826">
    <property type="component" value="Chromosome"/>
</dbReference>
<dbReference type="GO" id="GO:0005737">
    <property type="term" value="C:cytoplasm"/>
    <property type="evidence" value="ECO:0007669"/>
    <property type="project" value="TreeGrafter"/>
</dbReference>
<dbReference type="GO" id="GO:0004834">
    <property type="term" value="F:tryptophan synthase activity"/>
    <property type="evidence" value="ECO:0007669"/>
    <property type="project" value="UniProtKB-UniRule"/>
</dbReference>
<dbReference type="CDD" id="cd06446">
    <property type="entry name" value="Trp-synth_B"/>
    <property type="match status" value="1"/>
</dbReference>
<dbReference type="FunFam" id="3.40.50.1100:FF:000001">
    <property type="entry name" value="Tryptophan synthase beta chain"/>
    <property type="match status" value="1"/>
</dbReference>
<dbReference type="FunFam" id="3.40.50.1100:FF:000004">
    <property type="entry name" value="Tryptophan synthase beta chain"/>
    <property type="match status" value="1"/>
</dbReference>
<dbReference type="Gene3D" id="3.40.50.1100">
    <property type="match status" value="2"/>
</dbReference>
<dbReference type="HAMAP" id="MF_00133">
    <property type="entry name" value="Trp_synth_beta"/>
    <property type="match status" value="1"/>
</dbReference>
<dbReference type="InterPro" id="IPR006653">
    <property type="entry name" value="Trp_synth_b_CS"/>
</dbReference>
<dbReference type="InterPro" id="IPR006654">
    <property type="entry name" value="Trp_synth_beta"/>
</dbReference>
<dbReference type="InterPro" id="IPR023026">
    <property type="entry name" value="Trp_synth_beta/beta-like"/>
</dbReference>
<dbReference type="InterPro" id="IPR001926">
    <property type="entry name" value="TrpB-like_PALP"/>
</dbReference>
<dbReference type="InterPro" id="IPR036052">
    <property type="entry name" value="TrpB-like_PALP_sf"/>
</dbReference>
<dbReference type="NCBIfam" id="TIGR00263">
    <property type="entry name" value="trpB"/>
    <property type="match status" value="1"/>
</dbReference>
<dbReference type="PANTHER" id="PTHR48077:SF3">
    <property type="entry name" value="TRYPTOPHAN SYNTHASE"/>
    <property type="match status" value="1"/>
</dbReference>
<dbReference type="PANTHER" id="PTHR48077">
    <property type="entry name" value="TRYPTOPHAN SYNTHASE-RELATED"/>
    <property type="match status" value="1"/>
</dbReference>
<dbReference type="Pfam" id="PF00291">
    <property type="entry name" value="PALP"/>
    <property type="match status" value="1"/>
</dbReference>
<dbReference type="PIRSF" id="PIRSF001413">
    <property type="entry name" value="Trp_syn_beta"/>
    <property type="match status" value="1"/>
</dbReference>
<dbReference type="SUPFAM" id="SSF53686">
    <property type="entry name" value="Tryptophan synthase beta subunit-like PLP-dependent enzymes"/>
    <property type="match status" value="1"/>
</dbReference>
<dbReference type="PROSITE" id="PS00168">
    <property type="entry name" value="TRP_SYNTHASE_BETA"/>
    <property type="match status" value="1"/>
</dbReference>
<reference key="1">
    <citation type="journal article" date="2002" name="Proc. Natl. Acad. Sci. U.S.A.">
        <title>The complete genome of hyperthermophile Methanopyrus kandleri AV19 and monophyly of archaeal methanogens.</title>
        <authorList>
            <person name="Slesarev A.I."/>
            <person name="Mezhevaya K.V."/>
            <person name="Makarova K.S."/>
            <person name="Polushin N.N."/>
            <person name="Shcherbinina O.V."/>
            <person name="Shakhova V.V."/>
            <person name="Belova G.I."/>
            <person name="Aravind L."/>
            <person name="Natale D.A."/>
            <person name="Rogozin I.B."/>
            <person name="Tatusov R.L."/>
            <person name="Wolf Y.I."/>
            <person name="Stetter K.O."/>
            <person name="Malykh A.G."/>
            <person name="Koonin E.V."/>
            <person name="Kozyavkin S.A."/>
        </authorList>
    </citation>
    <scope>NUCLEOTIDE SEQUENCE [LARGE SCALE GENOMIC DNA]</scope>
    <source>
        <strain>AV19 / DSM 6324 / JCM 9639 / NBRC 100938</strain>
    </source>
</reference>
<accession>Q8TX91</accession>
<keyword id="KW-0028">Amino-acid biosynthesis</keyword>
<keyword id="KW-0057">Aromatic amino acid biosynthesis</keyword>
<keyword id="KW-0456">Lyase</keyword>
<keyword id="KW-0663">Pyridoxal phosphate</keyword>
<keyword id="KW-1185">Reference proteome</keyword>
<keyword id="KW-0822">Tryptophan biosynthesis</keyword>
<gene>
    <name evidence="1" type="primary">trpB</name>
    <name type="ordered locus">MK0784</name>
</gene>
<sequence length="398" mass="43756">MDRYPDENGYFGEYGGRFVPETLMPALEELEDAFKEAREDPEFWEELEELWRKYAGRPTPLYYARNLSRKLGVKVYLKREDLVHGGAHKLNNTLGQALLADRMGKDRIIAETGAGQHGLATAMAGAALGKKVEIYMGAIDVERQKHNVFRMELMGAKVHPVKAGTQTLKDAINEALRDWITNLETTHYLLGSVVGPHPYPWIVREFQRVIGRETKEQITELEGGLPDAIVACTGGGSNSIGIFYDFLDDEEVALYAVEAGGKGLDTDEHSASLCAGEVGVLHGCRTKVLQDEHGQIRPTHSIAPGLDYPGVGPELAFLVDEGRVTADAVTDEEALRGFVMLNETEGILPALESAHAVYYVKKLVERGELDRGDVVVVNLSGRGDKDVRIAAEELGVEI</sequence>
<name>TRPB_METKA</name>
<protein>
    <recommendedName>
        <fullName evidence="1">Tryptophan synthase beta chain</fullName>
        <ecNumber evidence="1">4.2.1.20</ecNumber>
    </recommendedName>
</protein>
<proteinExistence type="inferred from homology"/>
<evidence type="ECO:0000255" key="1">
    <source>
        <dbReference type="HAMAP-Rule" id="MF_00133"/>
    </source>
</evidence>
<organism>
    <name type="scientific">Methanopyrus kandleri (strain AV19 / DSM 6324 / JCM 9639 / NBRC 100938)</name>
    <dbReference type="NCBI Taxonomy" id="190192"/>
    <lineage>
        <taxon>Archaea</taxon>
        <taxon>Methanobacteriati</taxon>
        <taxon>Methanobacteriota</taxon>
        <taxon>Methanomada group</taxon>
        <taxon>Methanopyri</taxon>
        <taxon>Methanopyrales</taxon>
        <taxon>Methanopyraceae</taxon>
        <taxon>Methanopyrus</taxon>
    </lineage>
</organism>
<comment type="function">
    <text evidence="1">The beta subunit is responsible for the synthesis of L-tryptophan from indole and L-serine.</text>
</comment>
<comment type="catalytic activity">
    <reaction evidence="1">
        <text>(1S,2R)-1-C-(indol-3-yl)glycerol 3-phosphate + L-serine = D-glyceraldehyde 3-phosphate + L-tryptophan + H2O</text>
        <dbReference type="Rhea" id="RHEA:10532"/>
        <dbReference type="ChEBI" id="CHEBI:15377"/>
        <dbReference type="ChEBI" id="CHEBI:33384"/>
        <dbReference type="ChEBI" id="CHEBI:57912"/>
        <dbReference type="ChEBI" id="CHEBI:58866"/>
        <dbReference type="ChEBI" id="CHEBI:59776"/>
        <dbReference type="EC" id="4.2.1.20"/>
    </reaction>
</comment>
<comment type="cofactor">
    <cofactor evidence="1">
        <name>pyridoxal 5'-phosphate</name>
        <dbReference type="ChEBI" id="CHEBI:597326"/>
    </cofactor>
</comment>
<comment type="pathway">
    <text evidence="1">Amino-acid biosynthesis; L-tryptophan biosynthesis; L-tryptophan from chorismate: step 5/5.</text>
</comment>
<comment type="subunit">
    <text evidence="1">Tetramer of two alpha and two beta chains.</text>
</comment>
<comment type="similarity">
    <text evidence="1">Belongs to the TrpB family.</text>
</comment>
<feature type="chain" id="PRO_0000099039" description="Tryptophan synthase beta chain">
    <location>
        <begin position="1"/>
        <end position="398"/>
    </location>
</feature>
<feature type="modified residue" description="N6-(pyridoxal phosphate)lysine" evidence="1">
    <location>
        <position position="89"/>
    </location>
</feature>